<comment type="catalytic activity">
    <reaction evidence="1">
        <text>tRNA(Lys) + L-lysine + ATP = L-lysyl-tRNA(Lys) + AMP + diphosphate</text>
        <dbReference type="Rhea" id="RHEA:20792"/>
        <dbReference type="Rhea" id="RHEA-COMP:9696"/>
        <dbReference type="Rhea" id="RHEA-COMP:9697"/>
        <dbReference type="ChEBI" id="CHEBI:30616"/>
        <dbReference type="ChEBI" id="CHEBI:32551"/>
        <dbReference type="ChEBI" id="CHEBI:33019"/>
        <dbReference type="ChEBI" id="CHEBI:78442"/>
        <dbReference type="ChEBI" id="CHEBI:78529"/>
        <dbReference type="ChEBI" id="CHEBI:456215"/>
        <dbReference type="EC" id="6.1.1.6"/>
    </reaction>
</comment>
<comment type="cofactor">
    <cofactor evidence="1">
        <name>Mg(2+)</name>
        <dbReference type="ChEBI" id="CHEBI:18420"/>
    </cofactor>
    <text evidence="1">Binds 3 Mg(2+) ions per subunit.</text>
</comment>
<comment type="subunit">
    <text evidence="1">Homodimer.</text>
</comment>
<comment type="subcellular location">
    <subcellularLocation>
        <location evidence="1">Cytoplasm</location>
    </subcellularLocation>
</comment>
<comment type="similarity">
    <text evidence="1">Belongs to the class-II aminoacyl-tRNA synthetase family.</text>
</comment>
<proteinExistence type="inferred from homology"/>
<feature type="chain" id="PRO_1000101122" description="Lysine--tRNA ligase">
    <location>
        <begin position="1"/>
        <end position="501"/>
    </location>
</feature>
<feature type="binding site" evidence="1">
    <location>
        <position position="402"/>
    </location>
    <ligand>
        <name>Mg(2+)</name>
        <dbReference type="ChEBI" id="CHEBI:18420"/>
        <label>1</label>
    </ligand>
</feature>
<feature type="binding site" evidence="1">
    <location>
        <position position="409"/>
    </location>
    <ligand>
        <name>Mg(2+)</name>
        <dbReference type="ChEBI" id="CHEBI:18420"/>
        <label>1</label>
    </ligand>
</feature>
<feature type="binding site" evidence="1">
    <location>
        <position position="409"/>
    </location>
    <ligand>
        <name>Mg(2+)</name>
        <dbReference type="ChEBI" id="CHEBI:18420"/>
        <label>2</label>
    </ligand>
</feature>
<protein>
    <recommendedName>
        <fullName evidence="1">Lysine--tRNA ligase</fullName>
        <ecNumber evidence="1">6.1.1.6</ecNumber>
    </recommendedName>
    <alternativeName>
        <fullName evidence="1">Lysyl-tRNA synthetase</fullName>
        <shortName evidence="1">LysRS</shortName>
    </alternativeName>
</protein>
<organism>
    <name type="scientific">Helicobacter pylori (strain Shi470)</name>
    <dbReference type="NCBI Taxonomy" id="512562"/>
    <lineage>
        <taxon>Bacteria</taxon>
        <taxon>Pseudomonadati</taxon>
        <taxon>Campylobacterota</taxon>
        <taxon>Epsilonproteobacteria</taxon>
        <taxon>Campylobacterales</taxon>
        <taxon>Helicobacteraceae</taxon>
        <taxon>Helicobacter</taxon>
    </lineage>
</organism>
<dbReference type="EC" id="6.1.1.6" evidence="1"/>
<dbReference type="EMBL" id="CP001072">
    <property type="protein sequence ID" value="ACD47645.1"/>
    <property type="molecule type" value="Genomic_DNA"/>
</dbReference>
<dbReference type="RefSeq" id="WP_000492522.1">
    <property type="nucleotide sequence ID" value="NC_010698.2"/>
</dbReference>
<dbReference type="SMR" id="B2US13"/>
<dbReference type="KEGG" id="hps:HPSH_00925"/>
<dbReference type="HOGENOM" id="CLU_008255_6_0_7"/>
<dbReference type="GO" id="GO:0005829">
    <property type="term" value="C:cytosol"/>
    <property type="evidence" value="ECO:0007669"/>
    <property type="project" value="TreeGrafter"/>
</dbReference>
<dbReference type="GO" id="GO:0005524">
    <property type="term" value="F:ATP binding"/>
    <property type="evidence" value="ECO:0007669"/>
    <property type="project" value="UniProtKB-UniRule"/>
</dbReference>
<dbReference type="GO" id="GO:0004824">
    <property type="term" value="F:lysine-tRNA ligase activity"/>
    <property type="evidence" value="ECO:0007669"/>
    <property type="project" value="UniProtKB-UniRule"/>
</dbReference>
<dbReference type="GO" id="GO:0000287">
    <property type="term" value="F:magnesium ion binding"/>
    <property type="evidence" value="ECO:0007669"/>
    <property type="project" value="UniProtKB-UniRule"/>
</dbReference>
<dbReference type="GO" id="GO:0000049">
    <property type="term" value="F:tRNA binding"/>
    <property type="evidence" value="ECO:0007669"/>
    <property type="project" value="TreeGrafter"/>
</dbReference>
<dbReference type="GO" id="GO:0006430">
    <property type="term" value="P:lysyl-tRNA aminoacylation"/>
    <property type="evidence" value="ECO:0007669"/>
    <property type="project" value="UniProtKB-UniRule"/>
</dbReference>
<dbReference type="CDD" id="cd00775">
    <property type="entry name" value="LysRS_core"/>
    <property type="match status" value="1"/>
</dbReference>
<dbReference type="CDD" id="cd04322">
    <property type="entry name" value="LysRS_N"/>
    <property type="match status" value="1"/>
</dbReference>
<dbReference type="FunFam" id="3.30.930.10:FF:000164">
    <property type="entry name" value="Lysine--tRNA ligase"/>
    <property type="match status" value="1"/>
</dbReference>
<dbReference type="Gene3D" id="3.30.930.10">
    <property type="entry name" value="Bira Bifunctional Protein, Domain 2"/>
    <property type="match status" value="1"/>
</dbReference>
<dbReference type="Gene3D" id="2.40.50.140">
    <property type="entry name" value="Nucleic acid-binding proteins"/>
    <property type="match status" value="1"/>
</dbReference>
<dbReference type="HAMAP" id="MF_00252">
    <property type="entry name" value="Lys_tRNA_synth_class2"/>
    <property type="match status" value="1"/>
</dbReference>
<dbReference type="InterPro" id="IPR004364">
    <property type="entry name" value="Aa-tRNA-synt_II"/>
</dbReference>
<dbReference type="InterPro" id="IPR006195">
    <property type="entry name" value="aa-tRNA-synth_II"/>
</dbReference>
<dbReference type="InterPro" id="IPR045864">
    <property type="entry name" value="aa-tRNA-synth_II/BPL/LPL"/>
</dbReference>
<dbReference type="InterPro" id="IPR002313">
    <property type="entry name" value="Lys-tRNA-ligase_II"/>
</dbReference>
<dbReference type="InterPro" id="IPR044136">
    <property type="entry name" value="Lys-tRNA-ligase_II_N"/>
</dbReference>
<dbReference type="InterPro" id="IPR018149">
    <property type="entry name" value="Lys-tRNA-synth_II_C"/>
</dbReference>
<dbReference type="InterPro" id="IPR012340">
    <property type="entry name" value="NA-bd_OB-fold"/>
</dbReference>
<dbReference type="InterPro" id="IPR004365">
    <property type="entry name" value="NA-bd_OB_tRNA"/>
</dbReference>
<dbReference type="NCBIfam" id="TIGR00499">
    <property type="entry name" value="lysS_bact"/>
    <property type="match status" value="1"/>
</dbReference>
<dbReference type="NCBIfam" id="NF001756">
    <property type="entry name" value="PRK00484.1"/>
    <property type="match status" value="1"/>
</dbReference>
<dbReference type="PANTHER" id="PTHR42918:SF15">
    <property type="entry name" value="LYSINE--TRNA LIGASE, CHLOROPLASTIC_MITOCHONDRIAL"/>
    <property type="match status" value="1"/>
</dbReference>
<dbReference type="PANTHER" id="PTHR42918">
    <property type="entry name" value="LYSYL-TRNA SYNTHETASE"/>
    <property type="match status" value="1"/>
</dbReference>
<dbReference type="Pfam" id="PF00152">
    <property type="entry name" value="tRNA-synt_2"/>
    <property type="match status" value="1"/>
</dbReference>
<dbReference type="Pfam" id="PF01336">
    <property type="entry name" value="tRNA_anti-codon"/>
    <property type="match status" value="1"/>
</dbReference>
<dbReference type="PRINTS" id="PR00982">
    <property type="entry name" value="TRNASYNTHLYS"/>
</dbReference>
<dbReference type="SUPFAM" id="SSF55681">
    <property type="entry name" value="Class II aaRS and biotin synthetases"/>
    <property type="match status" value="1"/>
</dbReference>
<dbReference type="SUPFAM" id="SSF50249">
    <property type="entry name" value="Nucleic acid-binding proteins"/>
    <property type="match status" value="1"/>
</dbReference>
<dbReference type="PROSITE" id="PS50862">
    <property type="entry name" value="AA_TRNA_LIGASE_II"/>
    <property type="match status" value="1"/>
</dbReference>
<accession>B2US13</accession>
<name>SYK_HELPS</name>
<sequence>MFSNQYIQQRIHKANSLREEGKNPYKNGLKRSLTNAAFLEKYAYVKGLEEPKDKEKCESIVGRVKLLRLMGKACFIKIEDESAILQAYVSQNELNDEFKSLKKHLEVGDIVLVKGFPFATKTGELSVHALEFHILSKTIVPLPEKFHGLSDIELRYRQRYLDLIVNPSVKDVFKKRSLIVSSVRKFFETEGFLEVETPMMHPIPGGANARPFITYHNALEIERYLRIAPELYLKRLIVGGFEAVFEINRNFRNEGMDHSHNPEFTMIEFYWAYHTYEDLIELSKRLFDYLLKTLNLPSKIIYNDMEVDFNQTSVISYLDALETIGGISKDILEKEDRLLAYLLEQSIKVEPDLTYGKLLAEAFDHFVEHQLINPTFVTQYPIEISPLARRNDSNPNIADRFELFIAGKEIANGFSELNDPLDQLERFKNQVAEKEKGDEEAQYMDEDYVWALAHGMPPTAGQGIGIDRLVMLLTGAKSIKDVILFPAMRPVKNDFNVESEE</sequence>
<reference key="1">
    <citation type="submission" date="2008-05" db="EMBL/GenBank/DDBJ databases">
        <title>Genome sequence of Helicobacter pylori from the remote Amazon: traces of Asian ancestry of the first Americans.</title>
        <authorList>
            <person name="Kersulyte D."/>
            <person name="Kalia A."/>
            <person name="Gilman R.H."/>
            <person name="Berg D.E."/>
        </authorList>
    </citation>
    <scope>NUCLEOTIDE SEQUENCE [LARGE SCALE GENOMIC DNA]</scope>
    <source>
        <strain>Shi470</strain>
    </source>
</reference>
<gene>
    <name evidence="1" type="primary">lysS</name>
    <name type="ordered locus">HPSH_00925</name>
</gene>
<keyword id="KW-0030">Aminoacyl-tRNA synthetase</keyword>
<keyword id="KW-0067">ATP-binding</keyword>
<keyword id="KW-0963">Cytoplasm</keyword>
<keyword id="KW-0436">Ligase</keyword>
<keyword id="KW-0460">Magnesium</keyword>
<keyword id="KW-0479">Metal-binding</keyword>
<keyword id="KW-0547">Nucleotide-binding</keyword>
<keyword id="KW-0648">Protein biosynthesis</keyword>
<evidence type="ECO:0000255" key="1">
    <source>
        <dbReference type="HAMAP-Rule" id="MF_00252"/>
    </source>
</evidence>